<sequence>MARVKRGNVARNRRNKILRLARGFQGSNGTLFRTANQRVMKALCNAYRDRRRRKRDFRRLWIARINAAARMNGVSYSRLIGGLKKADVRINRKMLAQLAVLDPSGFETVVAAAKS</sequence>
<feature type="chain" id="PRO_1000049093" description="Large ribosomal subunit protein bL20">
    <location>
        <begin position="1"/>
        <end position="115"/>
    </location>
</feature>
<name>RL20_SYNR3</name>
<reference key="1">
    <citation type="submission" date="2006-05" db="EMBL/GenBank/DDBJ databases">
        <authorList>
            <consortium name="Genoscope"/>
        </authorList>
    </citation>
    <scope>NUCLEOTIDE SEQUENCE [LARGE SCALE GENOMIC DNA]</scope>
    <source>
        <strain>RCC307</strain>
    </source>
</reference>
<proteinExistence type="inferred from homology"/>
<gene>
    <name evidence="1" type="primary">rplT</name>
    <name evidence="1" type="synonym">rpl20</name>
    <name type="ordered locus">SynRCC307_0059</name>
</gene>
<accession>A5GQ03</accession>
<dbReference type="EMBL" id="CT978603">
    <property type="protein sequence ID" value="CAK26962.1"/>
    <property type="molecule type" value="Genomic_DNA"/>
</dbReference>
<dbReference type="SMR" id="A5GQ03"/>
<dbReference type="STRING" id="316278.SynRCC307_0059"/>
<dbReference type="KEGG" id="syr:SynRCC307_0059"/>
<dbReference type="eggNOG" id="COG0292">
    <property type="taxonomic scope" value="Bacteria"/>
</dbReference>
<dbReference type="HOGENOM" id="CLU_123265_0_1_3"/>
<dbReference type="OrthoDB" id="9808966at2"/>
<dbReference type="Proteomes" id="UP000001115">
    <property type="component" value="Chromosome"/>
</dbReference>
<dbReference type="GO" id="GO:1990904">
    <property type="term" value="C:ribonucleoprotein complex"/>
    <property type="evidence" value="ECO:0007669"/>
    <property type="project" value="UniProtKB-KW"/>
</dbReference>
<dbReference type="GO" id="GO:0005840">
    <property type="term" value="C:ribosome"/>
    <property type="evidence" value="ECO:0007669"/>
    <property type="project" value="UniProtKB-KW"/>
</dbReference>
<dbReference type="GO" id="GO:0019843">
    <property type="term" value="F:rRNA binding"/>
    <property type="evidence" value="ECO:0007669"/>
    <property type="project" value="UniProtKB-UniRule"/>
</dbReference>
<dbReference type="GO" id="GO:0003735">
    <property type="term" value="F:structural constituent of ribosome"/>
    <property type="evidence" value="ECO:0007669"/>
    <property type="project" value="InterPro"/>
</dbReference>
<dbReference type="GO" id="GO:0000027">
    <property type="term" value="P:ribosomal large subunit assembly"/>
    <property type="evidence" value="ECO:0007669"/>
    <property type="project" value="UniProtKB-UniRule"/>
</dbReference>
<dbReference type="GO" id="GO:0006412">
    <property type="term" value="P:translation"/>
    <property type="evidence" value="ECO:0007669"/>
    <property type="project" value="InterPro"/>
</dbReference>
<dbReference type="CDD" id="cd07026">
    <property type="entry name" value="Ribosomal_L20"/>
    <property type="match status" value="1"/>
</dbReference>
<dbReference type="FunFam" id="1.10.1900.20:FF:000001">
    <property type="entry name" value="50S ribosomal protein L20"/>
    <property type="match status" value="1"/>
</dbReference>
<dbReference type="Gene3D" id="6.10.160.10">
    <property type="match status" value="1"/>
</dbReference>
<dbReference type="Gene3D" id="1.10.1900.20">
    <property type="entry name" value="Ribosomal protein L20"/>
    <property type="match status" value="1"/>
</dbReference>
<dbReference type="HAMAP" id="MF_00382">
    <property type="entry name" value="Ribosomal_bL20"/>
    <property type="match status" value="1"/>
</dbReference>
<dbReference type="InterPro" id="IPR005813">
    <property type="entry name" value="Ribosomal_bL20"/>
</dbReference>
<dbReference type="InterPro" id="IPR049946">
    <property type="entry name" value="RIBOSOMAL_L20_CS"/>
</dbReference>
<dbReference type="InterPro" id="IPR035566">
    <property type="entry name" value="Ribosomal_protein_bL20_C"/>
</dbReference>
<dbReference type="NCBIfam" id="TIGR01032">
    <property type="entry name" value="rplT_bact"/>
    <property type="match status" value="1"/>
</dbReference>
<dbReference type="PANTHER" id="PTHR10986">
    <property type="entry name" value="39S RIBOSOMAL PROTEIN L20"/>
    <property type="match status" value="1"/>
</dbReference>
<dbReference type="Pfam" id="PF00453">
    <property type="entry name" value="Ribosomal_L20"/>
    <property type="match status" value="1"/>
</dbReference>
<dbReference type="PRINTS" id="PR00062">
    <property type="entry name" value="RIBOSOMALL20"/>
</dbReference>
<dbReference type="SUPFAM" id="SSF74731">
    <property type="entry name" value="Ribosomal protein L20"/>
    <property type="match status" value="1"/>
</dbReference>
<dbReference type="PROSITE" id="PS00937">
    <property type="entry name" value="RIBOSOMAL_L20"/>
    <property type="match status" value="1"/>
</dbReference>
<protein>
    <recommendedName>
        <fullName evidence="1">Large ribosomal subunit protein bL20</fullName>
    </recommendedName>
    <alternativeName>
        <fullName evidence="2">50S ribosomal protein L20</fullName>
    </alternativeName>
</protein>
<organism>
    <name type="scientific">Synechococcus sp. (strain RCC307)</name>
    <dbReference type="NCBI Taxonomy" id="316278"/>
    <lineage>
        <taxon>Bacteria</taxon>
        <taxon>Bacillati</taxon>
        <taxon>Cyanobacteriota</taxon>
        <taxon>Cyanophyceae</taxon>
        <taxon>Synechococcales</taxon>
        <taxon>Synechococcaceae</taxon>
        <taxon>Synechococcus</taxon>
    </lineage>
</organism>
<evidence type="ECO:0000255" key="1">
    <source>
        <dbReference type="HAMAP-Rule" id="MF_00382"/>
    </source>
</evidence>
<evidence type="ECO:0000305" key="2"/>
<comment type="function">
    <text evidence="1">Binds directly to 23S ribosomal RNA and is necessary for the in vitro assembly process of the 50S ribosomal subunit. It is not involved in the protein synthesizing functions of that subunit.</text>
</comment>
<comment type="similarity">
    <text evidence="1">Belongs to the bacterial ribosomal protein bL20 family.</text>
</comment>
<keyword id="KW-1185">Reference proteome</keyword>
<keyword id="KW-0687">Ribonucleoprotein</keyword>
<keyword id="KW-0689">Ribosomal protein</keyword>
<keyword id="KW-0694">RNA-binding</keyword>
<keyword id="KW-0699">rRNA-binding</keyword>